<proteinExistence type="inferred from homology"/>
<keyword id="KW-0507">mRNA processing</keyword>
<keyword id="KW-0508">mRNA splicing</keyword>
<keyword id="KW-0539">Nucleus</keyword>
<keyword id="KW-1185">Reference proteome</keyword>
<keyword id="KW-0677">Repeat</keyword>
<keyword id="KW-0747">Spliceosome</keyword>
<accession>Q52DF3</accession>
<accession>A4RHL0</accession>
<accession>G4MSP9</accession>
<protein>
    <recommendedName>
        <fullName>Pre-mRNA-splicing factor SYF1</fullName>
    </recommendedName>
</protein>
<sequence>MSPAAALTNGSVRQPDLHLVTDDDFVYEQDIQRSPGSTKPWLAYISYKIQHGTVEEQAFVLERACMQLPRSYKLWKMYLTFRTKHIAKLNAAIFAAEYRKVNSLFERALILLNKMPRIWEMYLKFLMKQPLVTLTRRTFDRALRALPITQHNRIWALYRPFANSAAGPTAVKIWRRYMQVHPEDAEDFIELLYQVGYYTEAAKKYIDVLNNPRFTSKHGKGHFELWSEMVELLVEHATEVEAGYETGIDVERIIRSGIERFADQRGKLWVGLATYWIRRGSFERARDVFEEGITTVMTVRDFTLVFDSYAEFEESVIGAMMEVAGQRAEKGVVDEAADFDLDIRMMRFEHLMDRRPFLLNDVLLRQNPNNVNEWEKRVALWGDNHNEVVNTYTNAIAAVQPKKASGPFHQLWANYAKFYERGGDLRSARIIMEKAVKVPFKSVVELADMWIEWAEMELRNDNFEEAVRIMAKAVQAPKRSTVDYFDETLTPQQRVHKSWKLWSFYVDLVESVGTLEDTKKVYERIFELRIATPQTVVNYANLLEEHKYYEESFKIYERGLDLFSYPVAFELWNMYLTKAVDRKISIERLRDLFEQAVEGCPPKFAKIIYLMYGNLEEERGLARHAMRIYERATRAVSDEDRADMFNFYITKSASNFGLPSTRQIYERAIAALPDDEARDMCLKFADMEKRLGEIDRARAIYGHASQFCDPRTTPAFWTKWEQFEVQHGNEDTFKEMLRIKRAVQAKYNTDVNFIASQALARSQQQKQANGHGSGAEDGDDGVVDAMEALERQARAPAGFVAATEGNIKGDAATTNTTVAANPDAIDIDDMED</sequence>
<gene>
    <name type="primary">SYF1</name>
    <name type="ORF">MGG_07087</name>
</gene>
<feature type="chain" id="PRO_0000205732" description="Pre-mRNA-splicing factor SYF1">
    <location>
        <begin position="1"/>
        <end position="832"/>
    </location>
</feature>
<feature type="repeat" description="HAT 1">
    <location>
        <begin position="18"/>
        <end position="50"/>
    </location>
</feature>
<feature type="repeat" description="HAT 2">
    <location>
        <begin position="52"/>
        <end position="84"/>
    </location>
</feature>
<feature type="repeat" description="HAT 3">
    <location>
        <begin position="96"/>
        <end position="128"/>
    </location>
</feature>
<feature type="repeat" description="HAT 4">
    <location>
        <begin position="130"/>
        <end position="164"/>
    </location>
</feature>
<feature type="repeat" description="HAT 5">
    <location>
        <begin position="196"/>
        <end position="235"/>
    </location>
</feature>
<feature type="repeat" description="HAT 6">
    <location>
        <begin position="245"/>
        <end position="278"/>
    </location>
</feature>
<feature type="repeat" description="HAT 7">
    <location>
        <begin position="280"/>
        <end position="315"/>
    </location>
</feature>
<feature type="repeat" description="HAT 8">
    <location>
        <begin position="383"/>
        <end position="421"/>
    </location>
</feature>
<feature type="repeat" description="HAT 9">
    <location>
        <begin position="423"/>
        <end position="459"/>
    </location>
</feature>
<feature type="repeat" description="HAT 10">
    <location>
        <begin position="476"/>
        <end position="508"/>
    </location>
</feature>
<feature type="repeat" description="HAT 11">
    <location>
        <begin position="513"/>
        <end position="545"/>
    </location>
</feature>
<feature type="repeat" description="HAT 12">
    <location>
        <begin position="547"/>
        <end position="581"/>
    </location>
</feature>
<feature type="repeat" description="HAT 13">
    <location>
        <begin position="584"/>
        <end position="618"/>
    </location>
</feature>
<feature type="repeat" description="HAT 14">
    <location>
        <begin position="656"/>
        <end position="690"/>
    </location>
</feature>
<feature type="repeat" description="HAT 15">
    <location>
        <begin position="692"/>
        <end position="726"/>
    </location>
</feature>
<organism>
    <name type="scientific">Pyricularia oryzae (strain 70-15 / ATCC MYA-4617 / FGSC 8958)</name>
    <name type="common">Rice blast fungus</name>
    <name type="synonym">Magnaporthe oryzae</name>
    <dbReference type="NCBI Taxonomy" id="242507"/>
    <lineage>
        <taxon>Eukaryota</taxon>
        <taxon>Fungi</taxon>
        <taxon>Dikarya</taxon>
        <taxon>Ascomycota</taxon>
        <taxon>Pezizomycotina</taxon>
        <taxon>Sordariomycetes</taxon>
        <taxon>Sordariomycetidae</taxon>
        <taxon>Magnaporthales</taxon>
        <taxon>Pyriculariaceae</taxon>
        <taxon>Pyricularia</taxon>
    </lineage>
</organism>
<dbReference type="EMBL" id="CM001232">
    <property type="protein sequence ID" value="EHA55470.1"/>
    <property type="molecule type" value="Genomic_DNA"/>
</dbReference>
<dbReference type="RefSeq" id="XP_003715277.1">
    <property type="nucleotide sequence ID" value="XM_003715229.1"/>
</dbReference>
<dbReference type="SMR" id="Q52DF3"/>
<dbReference type="FunCoup" id="Q52DF3">
    <property type="interactions" value="1045"/>
</dbReference>
<dbReference type="STRING" id="242507.Q52DF3"/>
<dbReference type="EnsemblFungi" id="MGG_07087T0">
    <property type="protein sequence ID" value="MGG_07087T0"/>
    <property type="gene ID" value="MGG_07087"/>
</dbReference>
<dbReference type="GeneID" id="2682972"/>
<dbReference type="KEGG" id="mgr:MGG_07087"/>
<dbReference type="VEuPathDB" id="FungiDB:MGG_07087"/>
<dbReference type="eggNOG" id="KOG2047">
    <property type="taxonomic scope" value="Eukaryota"/>
</dbReference>
<dbReference type="HOGENOM" id="CLU_007736_0_0_1"/>
<dbReference type="InParanoid" id="Q52DF3"/>
<dbReference type="OMA" id="IWYNYLR"/>
<dbReference type="OrthoDB" id="10067343at2759"/>
<dbReference type="Proteomes" id="UP000009058">
    <property type="component" value="Chromosome 2"/>
</dbReference>
<dbReference type="GO" id="GO:0071014">
    <property type="term" value="C:post-mRNA release spliceosomal complex"/>
    <property type="evidence" value="ECO:0007669"/>
    <property type="project" value="EnsemblFungi"/>
</dbReference>
<dbReference type="GO" id="GO:0000974">
    <property type="term" value="C:Prp19 complex"/>
    <property type="evidence" value="ECO:0007669"/>
    <property type="project" value="EnsemblFungi"/>
</dbReference>
<dbReference type="GO" id="GO:0071007">
    <property type="term" value="C:U2-type catalytic step 2 spliceosome"/>
    <property type="evidence" value="ECO:0007669"/>
    <property type="project" value="TreeGrafter"/>
</dbReference>
<dbReference type="GO" id="GO:0000349">
    <property type="term" value="P:generation of catalytic spliceosome for first transesterification step"/>
    <property type="evidence" value="ECO:0007669"/>
    <property type="project" value="TreeGrafter"/>
</dbReference>
<dbReference type="FunFam" id="1.25.40.10:FF:000666">
    <property type="entry name" value="DNA repair and transcription protein (Xab2)"/>
    <property type="match status" value="1"/>
</dbReference>
<dbReference type="FunFam" id="1.25.40.10:FF:000023">
    <property type="entry name" value="Pre-mRNA-splicing factor SYF1"/>
    <property type="match status" value="1"/>
</dbReference>
<dbReference type="FunFam" id="1.25.40.10:FF:000720">
    <property type="entry name" value="Pre-mRNA-splicing factor SYF1"/>
    <property type="match status" value="1"/>
</dbReference>
<dbReference type="FunFam" id="1.25.40.10:FF:000038">
    <property type="entry name" value="Putative pre-mRNA-splicing factor SYF1"/>
    <property type="match status" value="1"/>
</dbReference>
<dbReference type="Gene3D" id="1.25.40.10">
    <property type="entry name" value="Tetratricopeptide repeat domain"/>
    <property type="match status" value="5"/>
</dbReference>
<dbReference type="InterPro" id="IPR003107">
    <property type="entry name" value="HAT"/>
</dbReference>
<dbReference type="InterPro" id="IPR055433">
    <property type="entry name" value="HAT_Syf1-like_N"/>
</dbReference>
<dbReference type="InterPro" id="IPR056350">
    <property type="entry name" value="HAT_Syf1_central"/>
</dbReference>
<dbReference type="InterPro" id="IPR055430">
    <property type="entry name" value="HAT_Syf1_CNRKL1_C"/>
</dbReference>
<dbReference type="InterPro" id="IPR045075">
    <property type="entry name" value="Syf1-like"/>
</dbReference>
<dbReference type="InterPro" id="IPR011990">
    <property type="entry name" value="TPR-like_helical_dom_sf"/>
</dbReference>
<dbReference type="PANTHER" id="PTHR11246">
    <property type="entry name" value="PRE-MRNA SPLICING FACTOR"/>
    <property type="match status" value="1"/>
</dbReference>
<dbReference type="PANTHER" id="PTHR11246:SF5">
    <property type="entry name" value="PRE-MRNA-SPLICING FACTOR SYF1"/>
    <property type="match status" value="1"/>
</dbReference>
<dbReference type="Pfam" id="PF23231">
    <property type="entry name" value="HAT_Syf1_CNRKL1_C"/>
    <property type="match status" value="1"/>
</dbReference>
<dbReference type="Pfam" id="PF23233">
    <property type="entry name" value="HAT_Syf1_CNRKL1_N"/>
    <property type="match status" value="1"/>
</dbReference>
<dbReference type="Pfam" id="PF23220">
    <property type="entry name" value="HAT_Syf1_M"/>
    <property type="match status" value="1"/>
</dbReference>
<dbReference type="SMART" id="SM00386">
    <property type="entry name" value="HAT"/>
    <property type="match status" value="10"/>
</dbReference>
<dbReference type="SUPFAM" id="SSF48452">
    <property type="entry name" value="TPR-like"/>
    <property type="match status" value="3"/>
</dbReference>
<name>SYF1_PYRO7</name>
<evidence type="ECO:0000250" key="1"/>
<evidence type="ECO:0000305" key="2"/>
<comment type="function">
    <text evidence="1">Involved in pre-mRNA splicing and cell cycle progression.</text>
</comment>
<comment type="subunit">
    <text evidence="1">Associated with the spliceosome.</text>
</comment>
<comment type="subcellular location">
    <subcellularLocation>
        <location evidence="1">Nucleus</location>
    </subcellularLocation>
</comment>
<comment type="similarity">
    <text evidence="2">Belongs to the crooked-neck family.</text>
</comment>
<reference key="1">
    <citation type="journal article" date="2005" name="Nature">
        <title>The genome sequence of the rice blast fungus Magnaporthe grisea.</title>
        <authorList>
            <person name="Dean R.A."/>
            <person name="Talbot N.J."/>
            <person name="Ebbole D.J."/>
            <person name="Farman M.L."/>
            <person name="Mitchell T.K."/>
            <person name="Orbach M.J."/>
            <person name="Thon M.R."/>
            <person name="Kulkarni R."/>
            <person name="Xu J.-R."/>
            <person name="Pan H."/>
            <person name="Read N.D."/>
            <person name="Lee Y.-H."/>
            <person name="Carbone I."/>
            <person name="Brown D."/>
            <person name="Oh Y.Y."/>
            <person name="Donofrio N."/>
            <person name="Jeong J.S."/>
            <person name="Soanes D.M."/>
            <person name="Djonovic S."/>
            <person name="Kolomiets E."/>
            <person name="Rehmeyer C."/>
            <person name="Li W."/>
            <person name="Harding M."/>
            <person name="Kim S."/>
            <person name="Lebrun M.-H."/>
            <person name="Bohnert H."/>
            <person name="Coughlan S."/>
            <person name="Butler J."/>
            <person name="Calvo S.E."/>
            <person name="Ma L.-J."/>
            <person name="Nicol R."/>
            <person name="Purcell S."/>
            <person name="Nusbaum C."/>
            <person name="Galagan J.E."/>
            <person name="Birren B.W."/>
        </authorList>
    </citation>
    <scope>NUCLEOTIDE SEQUENCE [LARGE SCALE GENOMIC DNA]</scope>
    <source>
        <strain>70-15 / ATCC MYA-4617 / FGSC 8958</strain>
    </source>
</reference>